<name>TBX2_HUMAN</name>
<reference key="1">
    <citation type="journal article" date="1995" name="Genomics">
        <title>Cloning and mapping of a human gene (TBX2) sharing a highly conserved protein motif with the Drosophila omb gene.</title>
        <authorList>
            <person name="Campbell C."/>
            <person name="Goodrich K."/>
            <person name="Casey G."/>
            <person name="Beatty B."/>
        </authorList>
    </citation>
    <scope>NUCLEOTIDE SEQUENCE [MRNA]</scope>
    <source>
        <tissue>Fetal kidney</tissue>
    </source>
</reference>
<reference key="2">
    <citation type="journal article" date="2006" name="Nature">
        <title>DNA sequence of human chromosome 17 and analysis of rearrangement in the human lineage.</title>
        <authorList>
            <person name="Zody M.C."/>
            <person name="Garber M."/>
            <person name="Adams D.J."/>
            <person name="Sharpe T."/>
            <person name="Harrow J."/>
            <person name="Lupski J.R."/>
            <person name="Nicholson C."/>
            <person name="Searle S.M."/>
            <person name="Wilming L."/>
            <person name="Young S.K."/>
            <person name="Abouelleil A."/>
            <person name="Allen N.R."/>
            <person name="Bi W."/>
            <person name="Bloom T."/>
            <person name="Borowsky M.L."/>
            <person name="Bugalter B.E."/>
            <person name="Butler J."/>
            <person name="Chang J.L."/>
            <person name="Chen C.-K."/>
            <person name="Cook A."/>
            <person name="Corum B."/>
            <person name="Cuomo C.A."/>
            <person name="de Jong P.J."/>
            <person name="DeCaprio D."/>
            <person name="Dewar K."/>
            <person name="FitzGerald M."/>
            <person name="Gilbert J."/>
            <person name="Gibson R."/>
            <person name="Gnerre S."/>
            <person name="Goldstein S."/>
            <person name="Grafham D.V."/>
            <person name="Grocock R."/>
            <person name="Hafez N."/>
            <person name="Hagopian D.S."/>
            <person name="Hart E."/>
            <person name="Norman C.H."/>
            <person name="Humphray S."/>
            <person name="Jaffe D.B."/>
            <person name="Jones M."/>
            <person name="Kamal M."/>
            <person name="Khodiyar V.K."/>
            <person name="LaButti K."/>
            <person name="Laird G."/>
            <person name="Lehoczky J."/>
            <person name="Liu X."/>
            <person name="Lokyitsang T."/>
            <person name="Loveland J."/>
            <person name="Lui A."/>
            <person name="Macdonald P."/>
            <person name="Major J.E."/>
            <person name="Matthews L."/>
            <person name="Mauceli E."/>
            <person name="McCarroll S.A."/>
            <person name="Mihalev A.H."/>
            <person name="Mudge J."/>
            <person name="Nguyen C."/>
            <person name="Nicol R."/>
            <person name="O'Leary S.B."/>
            <person name="Osoegawa K."/>
            <person name="Schwartz D.C."/>
            <person name="Shaw-Smith C."/>
            <person name="Stankiewicz P."/>
            <person name="Steward C."/>
            <person name="Swarbreck D."/>
            <person name="Venkataraman V."/>
            <person name="Whittaker C.A."/>
            <person name="Yang X."/>
            <person name="Zimmer A.R."/>
            <person name="Bradley A."/>
            <person name="Hubbard T."/>
            <person name="Birren B.W."/>
            <person name="Rogers J."/>
            <person name="Lander E.S."/>
            <person name="Nusbaum C."/>
        </authorList>
    </citation>
    <scope>NUCLEOTIDE SEQUENCE [LARGE SCALE GENOMIC DNA]</scope>
</reference>
<reference key="3">
    <citation type="journal article" date="2004" name="Genome Res.">
        <title>The status, quality, and expansion of the NIH full-length cDNA project: the Mammalian Gene Collection (MGC).</title>
        <authorList>
            <consortium name="The MGC Project Team"/>
        </authorList>
    </citation>
    <scope>NUCLEOTIDE SEQUENCE [LARGE SCALE MRNA]</scope>
    <source>
        <tissue>Brain</tissue>
    </source>
</reference>
<reference key="4">
    <citation type="journal article" date="1995" name="Mamm. Genome">
        <title>Identification, characterization, and localization to chromosome 17q21-22 of the human TBX2 homolog, member of a conserved developmental gene family.</title>
        <authorList>
            <person name="Law D.J."/>
            <person name="Gebuhr T."/>
            <person name="Garvey N."/>
            <person name="Agulnik S.I."/>
            <person name="Silver L.M."/>
        </authorList>
    </citation>
    <scope>NUCLEOTIDE SEQUENCE [MRNA] OF 162-255</scope>
    <source>
        <tissue>Fetal kidney</tissue>
    </source>
</reference>
<reference key="5">
    <citation type="journal article" date="2000" name="Gene">
        <title>Differential DNA binding and transcription modulation by three T-box proteins, T, TBX1 and TBX2.</title>
        <authorList>
            <person name="Sinha S."/>
            <person name="Abraham S."/>
            <person name="Gronostajski R.M."/>
            <person name="Campbell C.E."/>
        </authorList>
    </citation>
    <scope>FUNCTION</scope>
    <scope>SUBUNIT</scope>
    <scope>SUBCELLULAR LOCATION</scope>
    <scope>MUTAGENESIS OF ARG-132</scope>
</reference>
<reference key="6">
    <citation type="journal article" date="2000" name="Nat. Genet.">
        <title>Senescence bypass screen identifies TBX2, which represses Cdkn2a (p19(ARF)) and is amplified in a subset of human breast cancers.</title>
        <authorList>
            <person name="Jacobs J.J."/>
            <person name="Keblusek P."/>
            <person name="Robanus-Maandag E."/>
            <person name="Kristel P."/>
            <person name="Lingbeek M."/>
            <person name="Nederlof P.M."/>
            <person name="van Welsem T."/>
            <person name="van de Vijver M.J."/>
            <person name="Koh E.Y."/>
            <person name="Daley G.Q."/>
            <person name="van Lohuizen M."/>
        </authorList>
    </citation>
    <scope>FUNCTION</scope>
    <scope>DOMAIN</scope>
</reference>
<reference key="7">
    <citation type="journal article" date="2002" name="J. Biol. Chem.">
        <title>The T-box repressors TBX2 and TBX3 specifically regulate the tumor suppressor gene p14ARF via a variant T-site in the initiator.</title>
        <authorList>
            <person name="Lingbeek M.E."/>
            <person name="Jacobs J.J."/>
            <person name="van Lohuizen M."/>
        </authorList>
    </citation>
    <scope>FUNCTION</scope>
    <scope>MUTAGENESIS OF ARG-132; ARG-133 AND ALA-282</scope>
</reference>
<reference key="8">
    <citation type="journal article" date="2011" name="Circulation">
        <title>Formation of the building plan of the human heart: morphogenesis, growth, and differentiation.</title>
        <authorList>
            <person name="Sizarov A."/>
            <person name="Ya J."/>
            <person name="de Boer B.A."/>
            <person name="Lamers W.H."/>
            <person name="Christoffels V.M."/>
            <person name="Moorman A.F."/>
        </authorList>
    </citation>
    <scope>DEVELOPMENTAL STAGE</scope>
</reference>
<reference key="9">
    <citation type="journal article" date="2012" name="EMBO J.">
        <title>Physical and functional interaction between PML and TBX2 in the establishment of cellular senescence.</title>
        <authorList>
            <person name="Martin N."/>
            <person name="Benhamed M."/>
            <person name="Nacerddine K."/>
            <person name="Demarque M.D."/>
            <person name="van Lohuizen M."/>
            <person name="Dejean A."/>
            <person name="Bischof O."/>
        </authorList>
    </citation>
    <scope>FUNCTION</scope>
    <scope>INTERACTION WITH PML</scope>
    <scope>DOMAIN RD1</scope>
</reference>
<reference key="10">
    <citation type="journal article" date="2012" name="PLoS ONE">
        <title>The T box transcription factor TBX2 promotes epithelial-mesenchymal transition and invasion of normal and malignant breast epithelial cells.</title>
        <authorList>
            <person name="Wang B."/>
            <person name="Lindley L.E."/>
            <person name="Fernandez-Vega V."/>
            <person name="Rieger M.E."/>
            <person name="Sims A.H."/>
            <person name="Briegel K.J."/>
        </authorList>
    </citation>
    <scope>FUNCTION</scope>
</reference>
<reference key="11">
    <citation type="journal article" date="2017" name="Curr. Eye Res.">
        <title>The T-Box Transcription Factor TBX2 Regulates Cell Proliferation in the Retinal Pigment Epithelium.</title>
        <authorList>
            <person name="Wang J."/>
            <person name="Liu Y."/>
            <person name="Su Z."/>
            <person name="Pan L."/>
            <person name="Lu F."/>
            <person name="Qu J."/>
            <person name="Hou L."/>
        </authorList>
    </citation>
    <scope>FUNCTION</scope>
</reference>
<reference key="12">
    <citation type="journal article" date="2019" name="Cell. Mol. Life Sci.">
        <title>Transcriptional repression of the ectodomain sheddase ADAM10 by TBX2 and potential implication for Alzheimer's disease.</title>
        <authorList>
            <person name="Reinhardt S."/>
            <person name="Schuck F."/>
            <person name="Stoye N."/>
            <person name="Hartmann T."/>
            <person name="Grimm M.O.W."/>
            <person name="Pflugfelder G."/>
            <person name="Endres K."/>
        </authorList>
    </citation>
    <scope>FUNCTION</scope>
    <scope>DOMAIN</scope>
</reference>
<reference key="13">
    <citation type="journal article" date="2013" name="J. Proteome Res.">
        <title>Toward a comprehensive characterization of a human cancer cell phosphoproteome.</title>
        <authorList>
            <person name="Zhou H."/>
            <person name="Di Palma S."/>
            <person name="Preisinger C."/>
            <person name="Peng M."/>
            <person name="Polat A.N."/>
            <person name="Heck A.J."/>
            <person name="Mohammed S."/>
        </authorList>
    </citation>
    <scope>PHOSPHORYLATION [LARGE SCALE ANALYSIS] AT SER-653 AND SER-657</scope>
    <scope>IDENTIFICATION BY MASS SPECTROMETRY [LARGE SCALE ANALYSIS]</scope>
    <source>
        <tissue>Cervix carcinoma</tissue>
    </source>
</reference>
<reference key="14">
    <citation type="journal article" date="2014" name="J. Proteomics">
        <title>An enzyme assisted RP-RPLC approach for in-depth analysis of human liver phosphoproteome.</title>
        <authorList>
            <person name="Bian Y."/>
            <person name="Song C."/>
            <person name="Cheng K."/>
            <person name="Dong M."/>
            <person name="Wang F."/>
            <person name="Huang J."/>
            <person name="Sun D."/>
            <person name="Wang L."/>
            <person name="Ye M."/>
            <person name="Zou H."/>
        </authorList>
    </citation>
    <scope>IDENTIFICATION BY MASS SPECTROMETRY [LARGE SCALE ANALYSIS]</scope>
    <source>
        <tissue>Liver</tissue>
    </source>
</reference>
<reference key="15">
    <citation type="journal article" date="2018" name="Hum. Mol. Genet.">
        <title>Functional variants in TBX2 are associated with a syndromic cardiovascular and skeletal developmental disorder.</title>
        <authorList>
            <consortium name="Undiagnosed Diseases Network (UDN)"/>
            <person name="Liu N."/>
            <person name="Schoch K."/>
            <person name="Luo X."/>
            <person name="Pena L.D.M."/>
            <person name="Bhavana V.H."/>
            <person name="Kukolich M.K."/>
            <person name="Stringer S."/>
            <person name="Powis Z."/>
            <person name="Radtke K."/>
            <person name="Mroske C."/>
            <person name="Deak K.L."/>
            <person name="McDonald M.T."/>
            <person name="McConkie-Rosell A."/>
            <person name="Markert M.L."/>
            <person name="Kranz P.G."/>
            <person name="Stong N."/>
            <person name="Need A.C."/>
            <person name="Bick D."/>
            <person name="Amaral M.D."/>
            <person name="Worthey E.A."/>
            <person name="Levy S."/>
            <person name="Wangler M.F."/>
            <person name="Bellen H.J."/>
            <person name="Shashi V."/>
            <person name="Yamamoto S."/>
        </authorList>
    </citation>
    <scope>FUNCTION</scope>
    <scope>SUBCELLULAR LOCATION</scope>
    <scope>INVOLVEMENT IN VETD</scope>
    <scope>VARIANTS VETD GLN-20 AND HIS-305</scope>
    <scope>CHARACTERIZATION OF VARIANTS VETD GLN-20 AND HIS-305</scope>
</reference>
<keyword id="KW-0217">Developmental protein</keyword>
<keyword id="KW-0225">Disease variant</keyword>
<keyword id="KW-0238">DNA-binding</keyword>
<keyword id="KW-0539">Nucleus</keyword>
<keyword id="KW-0597">Phosphoprotein</keyword>
<keyword id="KW-1267">Proteomics identification</keyword>
<keyword id="KW-1185">Reference proteome</keyword>
<keyword id="KW-0804">Transcription</keyword>
<keyword id="KW-0805">Transcription regulation</keyword>
<accession>Q13207</accession>
<accession>Q16424</accession>
<accession>Q7Z647</accession>
<sequence>MREPALAASAMAYHPFHAPRPADFPMSAFLAAAQPSFFPALALPPGALAKPLPDPGLAGAAAAAAAAAAAAEAGLHVSALGPHPPAAHLRSLKSLEPEDEVEDDPKVTLEAKELWDQFHKLGTEMVITKSGRRMFPPFKVRVSGLDKKAKYILLMDIVAADDCRYKFHNSRWMVAGKADPEMPKRMYIHPDSPATGEQWMAKPVAFHKLKLTNNISDKHGFTILNSMHKYQPRFHIVRANDILKLPYSTFRTYVFPETDFIAVTAYQNDKITQLKIDNNPFAKGFRDTGNGRREKRKQLTLPSLRLYEEHCKPERDGAESDASSCDPPPAREPPTSPGAAPSPLRLHRARAEEKSCAADSDPEPERLSEERAGAPLGRSPAPDSASPTRLTEPERARERRSPERGKEPAESGGDGPFGLRSLEKERAEARRKDEGRKEAAEGKEQGLAPLVVQTDSASPLGAGHLPGLAFSSHLHGQQFFGPLGAGQPLFLHPGQFTMGPGAFSAMGMGHLLASVAGGGNGGGGGPGTAAGLDAGGLGPAASAASTAAPFPFHLSQHMLASQGIPMPTFGGLFPYPYTYMAAAAAAASALPATSAAAAAAAAAGSLSRSPFLGSARPRLRFSPYQIPVTIPPSTSLLTTGLASEGSKAAGGNSREPSPLPELALRKVGAPSRGALSPSGSAKEAANELQSIQRLVSGLESQRALSPGRESPK</sequence>
<gene>
    <name type="primary">TBX2</name>
</gene>
<comment type="function">
    <text evidence="1 4 5 6 8 9 10 11 12">Transcription factor which acts as a transcriptional repressor (PubMed:11062467, PubMed:11111039, PubMed:12000749, PubMed:22844464, PubMed:30599067). May also function as a transcriptional activator (By similarity). Binds to the palindromic T site 5'-TTCACACCTAGGTGTGAA-3' DNA sequence, or a half-site, which are present in the regulatory region of several genes (PubMed:11111039, PubMed:12000749, PubMed:22844464, PubMed:30599067). Required for cardiac atrioventricular canal formation (PubMed:29726930). May cooperate with NKX2.5 to negatively modulate expression of NPPA/ANF in the atrioventricular canal (By similarity). May play a role as a positive regulator of TGFB2 expression, perhaps acting in concert with GATA4 in the developing outflow tract myocardium (By similarity). Plays a role in limb pattern formation (PubMed:29726930). Acts as a transcriptional repressor of ADAM10 gene expression, perhaps in concert with histone deacetylase HDAC1 as cofactor (PubMed:30599067). Involved in branching morphogenesis in both developing lungs and adult mammary glands, via negative modulation of target genes; acting redundantly with TBX3 (By similarity). Required, together with TBX3, to maintain cell proliferation in the embryonic lung mesenchyme; perhaps acting downstream of SHH, BMP and TGFbeta signaling (By similarity). Involved in modulating early inner ear development, acting independently of, and also redundantly with TBX3, in different subregions of the developing ear (By similarity). Acts as a negative regulator of PML function in cellular senescence (PubMed:22002537). Acts as a negative regulator of expression of CDKN1A/p21, IL33 and CCN4; repression of CDKN1A is enhanced in response to UV-induced stress, perhaps as a result of phosphorylation by p38 MAPK (By similarity). Negatively modulates expression of CDKN2A/p14ARF and CDH1/E-cadherin (PubMed:11062467, PubMed:12000749, PubMed:22844464). Plays a role in induction of the epithelial-mesenchymal transition (EMT) (PubMed:22844464). Plays a role in melanocyte proliferation, perhaps via regulation of cyclin CCND1 (By similarity). Involved in melanogenesis, acting via negative modulation of expression of DHICA oxidase/TYRP1 and P protein/OCA2 (By similarity). Involved in regulating retinal pigment epithelium (RPE) cell proliferation, perhaps via negatively modulating transcription of the transcription factor CEBPD (PubMed:28910203).</text>
</comment>
<comment type="subunit">
    <text evidence="5 8">Binds DNA as a monomer (PubMed:11111039). Interacts with PML (isoform PML-2, isoform PML-3 and isoform PML-4) (PubMed:22002537).</text>
</comment>
<comment type="interaction">
    <interactant intactId="EBI-2853051">
        <id>Q13207</id>
    </interactant>
    <interactant intactId="EBI-8624731">
        <id>P0C7T5</id>
        <label>ATXN1L</label>
    </interactant>
    <organismsDiffer>false</organismsDiffer>
    <experiments>3</experiments>
</comment>
<comment type="interaction">
    <interactant intactId="EBI-2853051">
        <id>Q13207</id>
    </interactant>
    <interactant intactId="EBI-7062247">
        <id>Q9UHD4</id>
        <label>CIDEB</label>
    </interactant>
    <organismsDiffer>false</organismsDiffer>
    <experiments>3</experiments>
</comment>
<comment type="interaction">
    <interactant intactId="EBI-2853051">
        <id>Q13207</id>
    </interactant>
    <interactant intactId="EBI-743033">
        <id>Q9NZN8</id>
        <label>CNOT2</label>
    </interactant>
    <organismsDiffer>false</organismsDiffer>
    <experiments>3</experiments>
</comment>
<comment type="interaction">
    <interactant intactId="EBI-2853051">
        <id>Q13207</id>
    </interactant>
    <interactant intactId="EBI-3867333">
        <id>A8MQ03</id>
        <label>CYSRT1</label>
    </interactant>
    <organismsDiffer>false</organismsDiffer>
    <experiments>3</experiments>
</comment>
<comment type="interaction">
    <interactant intactId="EBI-2853051">
        <id>Q13207</id>
    </interactant>
    <interactant intactId="EBI-22311199">
        <id>Q3LI67</id>
        <label>KRTAP6-3</label>
    </interactant>
    <organismsDiffer>false</organismsDiffer>
    <experiments>3</experiments>
</comment>
<comment type="interaction">
    <interactant intactId="EBI-2853051">
        <id>Q13207</id>
    </interactant>
    <interactant intactId="EBI-11959475">
        <id>P25791-3</id>
        <label>LMO2</label>
    </interactant>
    <organismsDiffer>false</organismsDiffer>
    <experiments>3</experiments>
</comment>
<comment type="interaction">
    <interactant intactId="EBI-2853051">
        <id>Q13207</id>
    </interactant>
    <interactant intactId="EBI-8025850">
        <id>O14770-4</id>
        <label>MEIS2</label>
    </interactant>
    <organismsDiffer>false</organismsDiffer>
    <experiments>3</experiments>
</comment>
<comment type="interaction">
    <interactant intactId="EBI-2853051">
        <id>Q13207</id>
    </interactant>
    <interactant intactId="EBI-295890">
        <id>P29590</id>
        <label>PML</label>
    </interactant>
    <organismsDiffer>false</organismsDiffer>
    <experiments>2</experiments>
</comment>
<comment type="interaction">
    <interactant intactId="EBI-2853051">
        <id>Q13207</id>
    </interactant>
    <interactant intactId="EBI-12076664">
        <id>O14787-2</id>
        <label>TNPO2</label>
    </interactant>
    <organismsDiffer>false</organismsDiffer>
    <experiments>3</experiments>
</comment>
<comment type="interaction">
    <interactant intactId="EBI-2853051">
        <id>Q13207</id>
    </interactant>
    <interactant intactId="EBI-948354">
        <id>Q6DKK2</id>
        <label>TTC19</label>
    </interactant>
    <organismsDiffer>false</organismsDiffer>
    <experiments>3</experiments>
</comment>
<comment type="subcellular location">
    <subcellularLocation>
        <location evidence="11 14">Nucleus</location>
    </subcellularLocation>
</comment>
<comment type="tissue specificity">
    <text>Expressed primarily in adult in kidney, lung, and placenta. Weak expression in heart and ovary.</text>
</comment>
<comment type="developmental stage">
    <text evidence="7">Expressed in the outflow tract and the atrioventricular canal at embryonic stage 12 and gradually reduced by stage 16 (at protein level).</text>
</comment>
<comment type="domain">
    <text evidence="4 8 12">Repression domain 1 (RD1) is involved in transcriptional repression (PubMed:11062467, PubMed:30599067). RD1 is necessary for its interaction with PML (PubMed:22002537).</text>
</comment>
<comment type="disease" evidence="11">
    <disease id="DI-05435">
        <name>Vertebral anomalies and variable endocrine and T-cell dysfunction</name>
        <acronym>VETD</acronym>
        <description>An autosomal dominant syndrome characterized by skeletal malformations primarily involving the vertebrae, immunodeficiency, endocrine abnormalities such as hypoparathyroidism and growth hormone deficiency, craniofacial dysmorphism, congenital cardiac anomalies consisting of double-outlet right ventricle, pulmonary valve stenosis and atrial septal defect, and developmental impairments.</description>
        <dbReference type="MIM" id="618223"/>
    </disease>
    <text>The disease is caused by variants affecting the gene represented in this entry.</text>
</comment>
<comment type="sequence caution" evidence="13">
    <conflict type="frameshift">
        <sequence resource="EMBL-CDS" id="AAA73861"/>
    </conflict>
</comment>
<comment type="sequence caution" evidence="13">
    <conflict type="erroneous initiation">
        <sequence resource="EMBL-CDS" id="AAH52566"/>
    </conflict>
    <text>Truncated N-terminus.</text>
</comment>
<comment type="online information" name="Atlas of Genetics and Cytogenetics in Oncology and Haematology">
    <link uri="https://atlasgeneticsoncology.org/gene/42485/TBX2"/>
</comment>
<comment type="online information" name="Undiagnosed Disease Network">
    <link uri="https://undiagnosed.hms.harvard.edu/genes/tbx2/"/>
    <text>TBX2</text>
</comment>
<organism>
    <name type="scientific">Homo sapiens</name>
    <name type="common">Human</name>
    <dbReference type="NCBI Taxonomy" id="9606"/>
    <lineage>
        <taxon>Eukaryota</taxon>
        <taxon>Metazoa</taxon>
        <taxon>Chordata</taxon>
        <taxon>Craniata</taxon>
        <taxon>Vertebrata</taxon>
        <taxon>Euteleostomi</taxon>
        <taxon>Mammalia</taxon>
        <taxon>Eutheria</taxon>
        <taxon>Euarchontoglires</taxon>
        <taxon>Primates</taxon>
        <taxon>Haplorrhini</taxon>
        <taxon>Catarrhini</taxon>
        <taxon>Hominidae</taxon>
        <taxon>Homo</taxon>
    </lineage>
</organism>
<dbReference type="EMBL" id="U28049">
    <property type="protein sequence ID" value="AAA73861.1"/>
    <property type="status" value="ALT_FRAME"/>
    <property type="molecule type" value="mRNA"/>
</dbReference>
<dbReference type="EMBL" id="AC005746">
    <property type="status" value="NOT_ANNOTATED_CDS"/>
    <property type="molecule type" value="Genomic_DNA"/>
</dbReference>
<dbReference type="EMBL" id="BC052566">
    <property type="protein sequence ID" value="AAH52566.1"/>
    <property type="status" value="ALT_INIT"/>
    <property type="molecule type" value="mRNA"/>
</dbReference>
<dbReference type="EMBL" id="S81264">
    <property type="protein sequence ID" value="AAB36216.1"/>
    <property type="molecule type" value="mRNA"/>
</dbReference>
<dbReference type="CCDS" id="CCDS11627.2"/>
<dbReference type="PIR" id="G01840">
    <property type="entry name" value="G01840"/>
</dbReference>
<dbReference type="RefSeq" id="NP_005985.3">
    <property type="nucleotide sequence ID" value="NM_005994.3"/>
</dbReference>
<dbReference type="SMR" id="Q13207"/>
<dbReference type="BioGRID" id="112772">
    <property type="interactions" value="23"/>
</dbReference>
<dbReference type="FunCoup" id="Q13207">
    <property type="interactions" value="908"/>
</dbReference>
<dbReference type="IntAct" id="Q13207">
    <property type="interactions" value="18"/>
</dbReference>
<dbReference type="MINT" id="Q13207"/>
<dbReference type="STRING" id="9606.ENSP00000240328"/>
<dbReference type="GlyCosmos" id="Q13207">
    <property type="glycosylation" value="2 sites, 1 glycan"/>
</dbReference>
<dbReference type="GlyGen" id="Q13207">
    <property type="glycosylation" value="3 sites, 1 O-linked glycan (3 sites)"/>
</dbReference>
<dbReference type="iPTMnet" id="Q13207"/>
<dbReference type="PhosphoSitePlus" id="Q13207"/>
<dbReference type="BioMuta" id="TBX2"/>
<dbReference type="DMDM" id="294862490"/>
<dbReference type="jPOST" id="Q13207"/>
<dbReference type="MassIVE" id="Q13207"/>
<dbReference type="PaxDb" id="9606-ENSP00000240328"/>
<dbReference type="PeptideAtlas" id="Q13207"/>
<dbReference type="ProteomicsDB" id="59225"/>
<dbReference type="Pumba" id="Q13207"/>
<dbReference type="Antibodypedia" id="1779">
    <property type="antibodies" value="318 antibodies from 37 providers"/>
</dbReference>
<dbReference type="DNASU" id="6909"/>
<dbReference type="Ensembl" id="ENST00000240328.4">
    <property type="protein sequence ID" value="ENSP00000240328.3"/>
    <property type="gene ID" value="ENSG00000121068.14"/>
</dbReference>
<dbReference type="GeneID" id="6909"/>
<dbReference type="KEGG" id="hsa:6909"/>
<dbReference type="MANE-Select" id="ENST00000240328.4">
    <property type="protein sequence ID" value="ENSP00000240328.3"/>
    <property type="RefSeq nucleotide sequence ID" value="NM_005994.4"/>
    <property type="RefSeq protein sequence ID" value="NP_005985.3"/>
</dbReference>
<dbReference type="UCSC" id="uc010wox.3">
    <property type="organism name" value="human"/>
</dbReference>
<dbReference type="AGR" id="HGNC:11597"/>
<dbReference type="CTD" id="6909"/>
<dbReference type="DisGeNET" id="6909"/>
<dbReference type="GeneCards" id="TBX2"/>
<dbReference type="HGNC" id="HGNC:11597">
    <property type="gene designation" value="TBX2"/>
</dbReference>
<dbReference type="HPA" id="ENSG00000121068">
    <property type="expression patterns" value="Tissue enhanced (lung)"/>
</dbReference>
<dbReference type="MalaCards" id="TBX2"/>
<dbReference type="MIM" id="600747">
    <property type="type" value="gene"/>
</dbReference>
<dbReference type="MIM" id="618223">
    <property type="type" value="phenotype"/>
</dbReference>
<dbReference type="neXtProt" id="NX_Q13207"/>
<dbReference type="OpenTargets" id="ENSG00000121068"/>
<dbReference type="PharmGKB" id="PA36360"/>
<dbReference type="VEuPathDB" id="HostDB:ENSG00000121068"/>
<dbReference type="eggNOG" id="KOG3585">
    <property type="taxonomic scope" value="Eukaryota"/>
</dbReference>
<dbReference type="GeneTree" id="ENSGT00940000158439"/>
<dbReference type="HOGENOM" id="CLU_023038_1_0_1"/>
<dbReference type="InParanoid" id="Q13207"/>
<dbReference type="OMA" id="EQCKPER"/>
<dbReference type="OrthoDB" id="7442607at2759"/>
<dbReference type="PAN-GO" id="Q13207">
    <property type="GO annotations" value="4 GO annotations based on evolutionary models"/>
</dbReference>
<dbReference type="PhylomeDB" id="Q13207"/>
<dbReference type="TreeFam" id="TF106341"/>
<dbReference type="PathwayCommons" id="Q13207"/>
<dbReference type="Reactome" id="R-HSA-9825892">
    <property type="pathway name" value="Regulation of MITF-M-dependent genes involved in cell cycle and proliferation"/>
</dbReference>
<dbReference type="SignaLink" id="Q13207"/>
<dbReference type="SIGNOR" id="Q13207"/>
<dbReference type="BioGRID-ORCS" id="6909">
    <property type="hits" value="28 hits in 1173 CRISPR screens"/>
</dbReference>
<dbReference type="ChiTaRS" id="TBX2">
    <property type="organism name" value="human"/>
</dbReference>
<dbReference type="GeneWiki" id="TBX2"/>
<dbReference type="GenomeRNAi" id="6909"/>
<dbReference type="Pharos" id="Q13207">
    <property type="development level" value="Tbio"/>
</dbReference>
<dbReference type="PRO" id="PR:Q13207"/>
<dbReference type="Proteomes" id="UP000005640">
    <property type="component" value="Chromosome 17"/>
</dbReference>
<dbReference type="RNAct" id="Q13207">
    <property type="molecule type" value="protein"/>
</dbReference>
<dbReference type="Bgee" id="ENSG00000121068">
    <property type="expression patterns" value="Expressed in right lung and 166 other cell types or tissues"/>
</dbReference>
<dbReference type="ExpressionAtlas" id="Q13207">
    <property type="expression patterns" value="baseline and differential"/>
</dbReference>
<dbReference type="GO" id="GO:0000785">
    <property type="term" value="C:chromatin"/>
    <property type="evidence" value="ECO:0000247"/>
    <property type="project" value="NTNU_SB"/>
</dbReference>
<dbReference type="GO" id="GO:0005737">
    <property type="term" value="C:cytoplasm"/>
    <property type="evidence" value="ECO:0007669"/>
    <property type="project" value="Ensembl"/>
</dbReference>
<dbReference type="GO" id="GO:0005654">
    <property type="term" value="C:nucleoplasm"/>
    <property type="evidence" value="ECO:0000304"/>
    <property type="project" value="Reactome"/>
</dbReference>
<dbReference type="GO" id="GO:0005634">
    <property type="term" value="C:nucleus"/>
    <property type="evidence" value="ECO:0000314"/>
    <property type="project" value="UniProtKB"/>
</dbReference>
<dbReference type="GO" id="GO:0005667">
    <property type="term" value="C:transcription regulator complex"/>
    <property type="evidence" value="ECO:0007669"/>
    <property type="project" value="Ensembl"/>
</dbReference>
<dbReference type="GO" id="GO:0003677">
    <property type="term" value="F:DNA binding"/>
    <property type="evidence" value="ECO:0000304"/>
    <property type="project" value="ProtInc"/>
</dbReference>
<dbReference type="GO" id="GO:0000981">
    <property type="term" value="F:DNA-binding transcription factor activity, RNA polymerase II-specific"/>
    <property type="evidence" value="ECO:0000247"/>
    <property type="project" value="NTNU_SB"/>
</dbReference>
<dbReference type="GO" id="GO:0140297">
    <property type="term" value="F:DNA-binding transcription factor binding"/>
    <property type="evidence" value="ECO:0007669"/>
    <property type="project" value="Ensembl"/>
</dbReference>
<dbReference type="GO" id="GO:0001227">
    <property type="term" value="F:DNA-binding transcription repressor activity, RNA polymerase II-specific"/>
    <property type="evidence" value="ECO:0000314"/>
    <property type="project" value="NTNU_SB"/>
</dbReference>
<dbReference type="GO" id="GO:0042826">
    <property type="term" value="F:histone deacetylase binding"/>
    <property type="evidence" value="ECO:0007669"/>
    <property type="project" value="Ensembl"/>
</dbReference>
<dbReference type="GO" id="GO:0000978">
    <property type="term" value="F:RNA polymerase II cis-regulatory region sequence-specific DNA binding"/>
    <property type="evidence" value="ECO:0000314"/>
    <property type="project" value="UniProtKB"/>
</dbReference>
<dbReference type="GO" id="GO:0043565">
    <property type="term" value="F:sequence-specific DNA binding"/>
    <property type="evidence" value="ECO:0000314"/>
    <property type="project" value="UniProtKB"/>
</dbReference>
<dbReference type="GO" id="GO:1990837">
    <property type="term" value="F:sequence-specific double-stranded DNA binding"/>
    <property type="evidence" value="ECO:0000314"/>
    <property type="project" value="ARUK-UCL"/>
</dbReference>
<dbReference type="GO" id="GO:0035909">
    <property type="term" value="P:aorta morphogenesis"/>
    <property type="evidence" value="ECO:0000250"/>
    <property type="project" value="BHF-UCL"/>
</dbReference>
<dbReference type="GO" id="GO:0006915">
    <property type="term" value="P:apoptotic process"/>
    <property type="evidence" value="ECO:0007669"/>
    <property type="project" value="Ensembl"/>
</dbReference>
<dbReference type="GO" id="GO:0036302">
    <property type="term" value="P:atrioventricular canal development"/>
    <property type="evidence" value="ECO:0000250"/>
    <property type="project" value="BHF-UCL"/>
</dbReference>
<dbReference type="GO" id="GO:1905222">
    <property type="term" value="P:atrioventricular canal morphogenesis"/>
    <property type="evidence" value="ECO:0000250"/>
    <property type="project" value="BHF-UCL"/>
</dbReference>
<dbReference type="GO" id="GO:1905072">
    <property type="term" value="P:cardiac jelly development"/>
    <property type="evidence" value="ECO:0000315"/>
    <property type="project" value="BHF-UCL"/>
</dbReference>
<dbReference type="GO" id="GO:0060379">
    <property type="term" value="P:cardiac muscle cell myoblast differentiation"/>
    <property type="evidence" value="ECO:0007669"/>
    <property type="project" value="Ensembl"/>
</dbReference>
<dbReference type="GO" id="GO:0048738">
    <property type="term" value="P:cardiac muscle tissue development"/>
    <property type="evidence" value="ECO:0000250"/>
    <property type="project" value="BHF-UCL"/>
</dbReference>
<dbReference type="GO" id="GO:0001708">
    <property type="term" value="P:cell fate specification"/>
    <property type="evidence" value="ECO:0000318"/>
    <property type="project" value="GO_Central"/>
</dbReference>
<dbReference type="GO" id="GO:0071549">
    <property type="term" value="P:cellular response to dexamethasone stimulus"/>
    <property type="evidence" value="ECO:0007669"/>
    <property type="project" value="Ensembl"/>
</dbReference>
<dbReference type="GO" id="GO:0090398">
    <property type="term" value="P:cellular senescence"/>
    <property type="evidence" value="ECO:0000314"/>
    <property type="project" value="UniProtKB"/>
</dbReference>
<dbReference type="GO" id="GO:0090103">
    <property type="term" value="P:cochlea morphogenesis"/>
    <property type="evidence" value="ECO:0007669"/>
    <property type="project" value="Ensembl"/>
</dbReference>
<dbReference type="GO" id="GO:0060560">
    <property type="term" value="P:developmental growth involved in morphogenesis"/>
    <property type="evidence" value="ECO:0007669"/>
    <property type="project" value="Ensembl"/>
</dbReference>
<dbReference type="GO" id="GO:0048596">
    <property type="term" value="P:embryonic camera-type eye morphogenesis"/>
    <property type="evidence" value="ECO:0000250"/>
    <property type="project" value="BHF-UCL"/>
</dbReference>
<dbReference type="GO" id="GO:0042733">
    <property type="term" value="P:embryonic digit morphogenesis"/>
    <property type="evidence" value="ECO:0000250"/>
    <property type="project" value="BHF-UCL"/>
</dbReference>
<dbReference type="GO" id="GO:0035050">
    <property type="term" value="P:embryonic heart tube development"/>
    <property type="evidence" value="ECO:0000250"/>
    <property type="project" value="UniProtKB"/>
</dbReference>
<dbReference type="GO" id="GO:0003272">
    <property type="term" value="P:endocardial cushion formation"/>
    <property type="evidence" value="ECO:0000315"/>
    <property type="project" value="BHF-UCL"/>
</dbReference>
<dbReference type="GO" id="GO:0003203">
    <property type="term" value="P:endocardial cushion morphogenesis"/>
    <property type="evidence" value="ECO:0000250"/>
    <property type="project" value="BHF-UCL"/>
</dbReference>
<dbReference type="GO" id="GO:0060441">
    <property type="term" value="P:epithelial tube branching involved in lung morphogenesis"/>
    <property type="evidence" value="ECO:0007669"/>
    <property type="project" value="Ensembl"/>
</dbReference>
<dbReference type="GO" id="GO:0008543">
    <property type="term" value="P:fibroblast growth factor receptor signaling pathway"/>
    <property type="evidence" value="ECO:0007669"/>
    <property type="project" value="Ensembl"/>
</dbReference>
<dbReference type="GO" id="GO:0001947">
    <property type="term" value="P:heart looping"/>
    <property type="evidence" value="ECO:0000250"/>
    <property type="project" value="UniProtKB"/>
</dbReference>
<dbReference type="GO" id="GO:0060596">
    <property type="term" value="P:mammary placode formation"/>
    <property type="evidence" value="ECO:0007669"/>
    <property type="project" value="Ensembl"/>
</dbReference>
<dbReference type="GO" id="GO:0097325">
    <property type="term" value="P:melanocyte proliferation"/>
    <property type="evidence" value="ECO:0007669"/>
    <property type="project" value="Ensembl"/>
</dbReference>
<dbReference type="GO" id="GO:0060916">
    <property type="term" value="P:mesenchymal cell proliferation involved in lung development"/>
    <property type="evidence" value="ECO:0007669"/>
    <property type="project" value="Ensembl"/>
</dbReference>
<dbReference type="GO" id="GO:0007521">
    <property type="term" value="P:muscle cell fate determination"/>
    <property type="evidence" value="ECO:0000250"/>
    <property type="project" value="BHF-UCL"/>
</dbReference>
<dbReference type="GO" id="GO:1901211">
    <property type="term" value="P:negative regulation of cardiac chamber formation"/>
    <property type="evidence" value="ECO:0000250"/>
    <property type="project" value="BHF-UCL"/>
</dbReference>
<dbReference type="GO" id="GO:2000773">
    <property type="term" value="P:negative regulation of cellular senescence"/>
    <property type="evidence" value="ECO:0000314"/>
    <property type="project" value="UniProtKB"/>
</dbReference>
<dbReference type="GO" id="GO:0045892">
    <property type="term" value="P:negative regulation of DNA-templated transcription"/>
    <property type="evidence" value="ECO:0000314"/>
    <property type="project" value="UniProtKB"/>
</dbReference>
<dbReference type="GO" id="GO:1901208">
    <property type="term" value="P:negative regulation of heart looping"/>
    <property type="evidence" value="ECO:0000250"/>
    <property type="project" value="BHF-UCL"/>
</dbReference>
<dbReference type="GO" id="GO:0000122">
    <property type="term" value="P:negative regulation of transcription by RNA polymerase II"/>
    <property type="evidence" value="ECO:0000314"/>
    <property type="project" value="UniProtKB"/>
</dbReference>
<dbReference type="GO" id="GO:0022008">
    <property type="term" value="P:neurogenesis"/>
    <property type="evidence" value="ECO:0007669"/>
    <property type="project" value="Ensembl"/>
</dbReference>
<dbReference type="GO" id="GO:0007219">
    <property type="term" value="P:Notch signaling pathway"/>
    <property type="evidence" value="ECO:0007669"/>
    <property type="project" value="Ensembl"/>
</dbReference>
<dbReference type="GO" id="GO:0003151">
    <property type="term" value="P:outflow tract morphogenesis"/>
    <property type="evidence" value="ECO:0000250"/>
    <property type="project" value="BHF-UCL"/>
</dbReference>
<dbReference type="GO" id="GO:0003148">
    <property type="term" value="P:outflow tract septum morphogenesis"/>
    <property type="evidence" value="ECO:0000250"/>
    <property type="project" value="BHF-UCL"/>
</dbReference>
<dbReference type="GO" id="GO:0060037">
    <property type="term" value="P:pharyngeal system development"/>
    <property type="evidence" value="ECO:0000250"/>
    <property type="project" value="BHF-UCL"/>
</dbReference>
<dbReference type="GO" id="GO:0043474">
    <property type="term" value="P:pigment metabolic process involved in pigmentation"/>
    <property type="evidence" value="ECO:0007669"/>
    <property type="project" value="Ensembl"/>
</dbReference>
<dbReference type="GO" id="GO:0060045">
    <property type="term" value="P:positive regulation of cardiac muscle cell proliferation"/>
    <property type="evidence" value="ECO:0000250"/>
    <property type="project" value="BHF-UCL"/>
</dbReference>
<dbReference type="GO" id="GO:1902808">
    <property type="term" value="P:positive regulation of cell cycle G1/S phase transition"/>
    <property type="evidence" value="ECO:0007669"/>
    <property type="project" value="Ensembl"/>
</dbReference>
<dbReference type="GO" id="GO:0045944">
    <property type="term" value="P:positive regulation of transcription by RNA polymerase II"/>
    <property type="evidence" value="ECO:0007669"/>
    <property type="project" value="Ensembl"/>
</dbReference>
<dbReference type="GO" id="GO:0008016">
    <property type="term" value="P:regulation of heart contraction"/>
    <property type="evidence" value="ECO:0000250"/>
    <property type="project" value="UniProtKB"/>
</dbReference>
<dbReference type="GO" id="GO:0006357">
    <property type="term" value="P:regulation of transcription by RNA polymerase II"/>
    <property type="evidence" value="ECO:0000250"/>
    <property type="project" value="BHF-UCL"/>
</dbReference>
<dbReference type="GO" id="GO:0032526">
    <property type="term" value="P:response to retinoic acid"/>
    <property type="evidence" value="ECO:0007669"/>
    <property type="project" value="Ensembl"/>
</dbReference>
<dbReference type="GO" id="GO:0060021">
    <property type="term" value="P:roof of mouth development"/>
    <property type="evidence" value="ECO:0007669"/>
    <property type="project" value="Ensembl"/>
</dbReference>
<dbReference type="GO" id="GO:0051145">
    <property type="term" value="P:smooth muscle cell differentiation"/>
    <property type="evidence" value="ECO:0007669"/>
    <property type="project" value="Ensembl"/>
</dbReference>
<dbReference type="GO" id="GO:0072105">
    <property type="term" value="P:ureteric peristalsis"/>
    <property type="evidence" value="ECO:0007669"/>
    <property type="project" value="Ensembl"/>
</dbReference>
<dbReference type="CDD" id="cd20188">
    <property type="entry name" value="T-box_TBX2_3-like"/>
    <property type="match status" value="1"/>
</dbReference>
<dbReference type="FunFam" id="2.60.40.820:FF:000003">
    <property type="entry name" value="T-box transcription factor TBX3"/>
    <property type="match status" value="1"/>
</dbReference>
<dbReference type="Gene3D" id="2.60.40.820">
    <property type="entry name" value="Transcription factor, T-box"/>
    <property type="match status" value="1"/>
</dbReference>
<dbReference type="InterPro" id="IPR008967">
    <property type="entry name" value="p53-like_TF_DNA-bd_sf"/>
</dbReference>
<dbReference type="InterPro" id="IPR046360">
    <property type="entry name" value="T-box_DNA-bd"/>
</dbReference>
<dbReference type="InterPro" id="IPR036960">
    <property type="entry name" value="T-box_sf"/>
</dbReference>
<dbReference type="InterPro" id="IPR022582">
    <property type="entry name" value="TBX2/3_TAD"/>
</dbReference>
<dbReference type="InterPro" id="IPR048387">
    <property type="entry name" value="TBX2_3_RD"/>
</dbReference>
<dbReference type="InterPro" id="IPR002070">
    <property type="entry name" value="TF_Brachyury"/>
</dbReference>
<dbReference type="InterPro" id="IPR001699">
    <property type="entry name" value="TF_T-box"/>
</dbReference>
<dbReference type="InterPro" id="IPR018186">
    <property type="entry name" value="TF_T-box_CS"/>
</dbReference>
<dbReference type="PANTHER" id="PTHR11267">
    <property type="entry name" value="T-BOX PROTEIN-RELATED"/>
    <property type="match status" value="1"/>
</dbReference>
<dbReference type="PANTHER" id="PTHR11267:SF82">
    <property type="entry name" value="T-BOX TRANSCRIPTION FACTOR TBX2"/>
    <property type="match status" value="1"/>
</dbReference>
<dbReference type="Pfam" id="PF00907">
    <property type="entry name" value="T-box"/>
    <property type="match status" value="1"/>
</dbReference>
<dbReference type="Pfam" id="PF20627">
    <property type="entry name" value="TBX2-3_RD"/>
    <property type="match status" value="1"/>
</dbReference>
<dbReference type="Pfam" id="PF12598">
    <property type="entry name" value="TBX2-3_TAD"/>
    <property type="match status" value="1"/>
</dbReference>
<dbReference type="PRINTS" id="PR00938">
    <property type="entry name" value="BRACHYURY"/>
</dbReference>
<dbReference type="PRINTS" id="PR00937">
    <property type="entry name" value="TBOX"/>
</dbReference>
<dbReference type="SMART" id="SM00425">
    <property type="entry name" value="TBOX"/>
    <property type="match status" value="1"/>
</dbReference>
<dbReference type="SUPFAM" id="SSF49417">
    <property type="entry name" value="p53-like transcription factors"/>
    <property type="match status" value="1"/>
</dbReference>
<dbReference type="PROSITE" id="PS01283">
    <property type="entry name" value="TBOX_1"/>
    <property type="match status" value="1"/>
</dbReference>
<dbReference type="PROSITE" id="PS01264">
    <property type="entry name" value="TBOX_2"/>
    <property type="match status" value="1"/>
</dbReference>
<dbReference type="PROSITE" id="PS50252">
    <property type="entry name" value="TBOX_3"/>
    <property type="match status" value="1"/>
</dbReference>
<proteinExistence type="evidence at protein level"/>
<evidence type="ECO:0000250" key="1">
    <source>
        <dbReference type="UniProtKB" id="Q60707"/>
    </source>
</evidence>
<evidence type="ECO:0000255" key="2">
    <source>
        <dbReference type="PROSITE-ProRule" id="PRU00201"/>
    </source>
</evidence>
<evidence type="ECO:0000256" key="3">
    <source>
        <dbReference type="SAM" id="MobiDB-lite"/>
    </source>
</evidence>
<evidence type="ECO:0000269" key="4">
    <source>
    </source>
</evidence>
<evidence type="ECO:0000269" key="5">
    <source>
    </source>
</evidence>
<evidence type="ECO:0000269" key="6">
    <source>
    </source>
</evidence>
<evidence type="ECO:0000269" key="7">
    <source>
    </source>
</evidence>
<evidence type="ECO:0000269" key="8">
    <source>
    </source>
</evidence>
<evidence type="ECO:0000269" key="9">
    <source>
    </source>
</evidence>
<evidence type="ECO:0000269" key="10">
    <source>
    </source>
</evidence>
<evidence type="ECO:0000269" key="11">
    <source>
    </source>
</evidence>
<evidence type="ECO:0000269" key="12">
    <source>
    </source>
</evidence>
<evidence type="ECO:0000305" key="13"/>
<evidence type="ECO:0000305" key="14">
    <source>
    </source>
</evidence>
<evidence type="ECO:0007744" key="15">
    <source>
    </source>
</evidence>
<protein>
    <recommendedName>
        <fullName>T-box transcription factor TBX2</fullName>
        <shortName>T-box protein 2</shortName>
    </recommendedName>
</protein>
<feature type="chain" id="PRO_0000184426" description="T-box transcription factor TBX2">
    <location>
        <begin position="1"/>
        <end position="712"/>
    </location>
</feature>
<feature type="DNA-binding region" description="T-box" evidence="2">
    <location>
        <begin position="109"/>
        <end position="287"/>
    </location>
</feature>
<feature type="region of interest" description="Disordered" evidence="3">
    <location>
        <begin position="313"/>
        <end position="450"/>
    </location>
</feature>
<feature type="region of interest" description="Repression domain 1 (RD1)" evidence="4 12">
    <location>
        <begin position="518"/>
        <end position="601"/>
    </location>
</feature>
<feature type="region of interest" description="Disordered" evidence="3">
    <location>
        <begin position="637"/>
        <end position="687"/>
    </location>
</feature>
<feature type="compositionally biased region" description="Pro residues" evidence="3">
    <location>
        <begin position="326"/>
        <end position="336"/>
    </location>
</feature>
<feature type="compositionally biased region" description="Basic and acidic residues" evidence="3">
    <location>
        <begin position="363"/>
        <end position="372"/>
    </location>
</feature>
<feature type="compositionally biased region" description="Basic and acidic residues" evidence="3">
    <location>
        <begin position="391"/>
        <end position="409"/>
    </location>
</feature>
<feature type="compositionally biased region" description="Basic and acidic residues" evidence="3">
    <location>
        <begin position="421"/>
        <end position="444"/>
    </location>
</feature>
<feature type="modified residue" description="Phosphoserine" evidence="1">
    <location>
        <position position="336"/>
    </location>
</feature>
<feature type="modified residue" description="Phosphoserine" evidence="1">
    <location>
        <position position="342"/>
    </location>
</feature>
<feature type="modified residue" description="Phosphoserine" evidence="1">
    <location>
        <position position="360"/>
    </location>
</feature>
<feature type="modified residue" description="Phosphoserine" evidence="1">
    <location>
        <position position="622"/>
    </location>
</feature>
<feature type="modified residue" description="Phosphoserine" evidence="15">
    <location>
        <position position="653"/>
    </location>
</feature>
<feature type="modified residue" description="Phosphoserine" evidence="15">
    <location>
        <position position="657"/>
    </location>
</feature>
<feature type="modified residue" description="Phosphoserine" evidence="1">
    <location>
        <position position="676"/>
    </location>
</feature>
<feature type="sequence variant" id="VAR_081780" description="In VETD; uncertain significance; decreased transcriptional regulatory activity; no effect on localization to the nucleus; dbSNP:rs1364709483." evidence="11">
    <original>R</original>
    <variation>Q</variation>
    <location>
        <position position="20"/>
    </location>
</feature>
<feature type="sequence variant" id="VAR_081781" description="In VETD; de novo variant; decreased transcriptional regulatory activity; no effect on localization to the nucleus; dbSNP:rs1555877071." evidence="11">
    <original>R</original>
    <variation>H</variation>
    <location>
        <position position="305"/>
    </location>
</feature>
<feature type="mutagenesis site" description="Abolishes repression of tumor suppressor ARF/p14ARF expression." evidence="6">
    <original>RR</original>
    <variation>EE</variation>
    <location>
        <begin position="132"/>
        <end position="133"/>
    </location>
</feature>
<feature type="mutagenesis site" description="Abolishes binding to T site 5'-TTCACACCTAGGTGTGAA-3' DNA sequence." evidence="5">
    <original>R</original>
    <variation>A</variation>
    <location>
        <position position="132"/>
    </location>
</feature>
<feature type="mutagenesis site" description="Severely impairs repression of tumor suppressor ARF/p14ARF expression." evidence="6">
    <original>A</original>
    <variation>E</variation>
    <location>
        <position position="282"/>
    </location>
</feature>
<feature type="sequence conflict" description="In Ref. 1; AAA73861." evidence="13" ref="1">
    <original>A</original>
    <variation>T</variation>
    <location>
        <position position="7"/>
    </location>
</feature>
<feature type="sequence conflict" description="In Ref. 4; AAB36216." evidence="13" ref="4">
    <original>Y</original>
    <variation>D</variation>
    <location>
        <position position="165"/>
    </location>
</feature>
<feature type="sequence conflict" description="In Ref. 4; AAB36216." evidence="13" ref="4">
    <original>AGKA</original>
    <variation>TDKT</variation>
    <location>
        <begin position="175"/>
        <end position="178"/>
    </location>
</feature>
<feature type="sequence conflict" description="In Ref. 1; AAA73861." evidence="13" ref="1">
    <original>G</original>
    <variation>R</variation>
    <location>
        <position position="373"/>
    </location>
</feature>
<feature type="sequence conflict" description="In Ref. 1; AAA73861." evidence="13" ref="1">
    <original>S</original>
    <variation>C</variation>
    <location>
        <position position="401"/>
    </location>
</feature>
<feature type="sequence conflict" description="In Ref. 1; AAA73861." evidence="13" ref="1">
    <original>A</original>
    <variation>P</variation>
    <location>
        <position position="427"/>
    </location>
</feature>
<feature type="sequence conflict" description="In Ref. 1; AAA73861." evidence="13" ref="1">
    <original>Q</original>
    <variation>L</variation>
    <location>
        <position position="689"/>
    </location>
</feature>